<evidence type="ECO:0000250" key="1"/>
<evidence type="ECO:0000255" key="2"/>
<evidence type="ECO:0000269" key="3">
    <source>
    </source>
</evidence>
<evidence type="ECO:0000269" key="4">
    <source>
    </source>
</evidence>
<evidence type="ECO:0000269" key="5">
    <source>
    </source>
</evidence>
<evidence type="ECO:0000269" key="6">
    <source>
    </source>
</evidence>
<evidence type="ECO:0000269" key="7">
    <source>
    </source>
</evidence>
<evidence type="ECO:0000269" key="8">
    <source ref="12"/>
</evidence>
<evidence type="ECO:0000305" key="9"/>
<evidence type="ECO:0007744" key="10">
    <source>
        <dbReference type="PDB" id="2CLS"/>
    </source>
</evidence>
<evidence type="ECO:0007829" key="11">
    <source>
        <dbReference type="PDB" id="2REX"/>
    </source>
</evidence>
<evidence type="ECO:0007829" key="12">
    <source>
        <dbReference type="PDB" id="3Q3J"/>
    </source>
</evidence>
<feature type="chain" id="PRO_0000198874" description="Rho-related GTP-binding protein Rho6">
    <location>
        <begin position="1"/>
        <end position="229"/>
    </location>
</feature>
<feature type="propeptide" id="PRO_0000281226" description="Removed in mature form" evidence="1">
    <location>
        <begin position="230"/>
        <end position="232"/>
    </location>
</feature>
<feature type="short sequence motif" description="Effector region" evidence="2">
    <location>
        <begin position="42"/>
        <end position="50"/>
    </location>
</feature>
<feature type="binding site" evidence="7 10">
    <location>
        <begin position="23"/>
        <end position="28"/>
    </location>
    <ligand>
        <name>GTP</name>
        <dbReference type="ChEBI" id="CHEBI:37565"/>
    </ligand>
</feature>
<feature type="binding site" evidence="7 10">
    <location>
        <begin position="38"/>
        <end position="45"/>
    </location>
    <ligand>
        <name>GTP</name>
        <dbReference type="ChEBI" id="CHEBI:37565"/>
    </ligand>
</feature>
<feature type="binding site" evidence="7 10">
    <location>
        <begin position="67"/>
        <end position="71"/>
    </location>
    <ligand>
        <name>GTP</name>
        <dbReference type="ChEBI" id="CHEBI:37565"/>
    </ligand>
</feature>
<feature type="binding site" evidence="7 10">
    <location>
        <begin position="125"/>
        <end position="128"/>
    </location>
    <ligand>
        <name>GTP</name>
        <dbReference type="ChEBI" id="CHEBI:37565"/>
    </ligand>
</feature>
<feature type="binding site" evidence="7 10">
    <location>
        <begin position="169"/>
        <end position="170"/>
    </location>
    <ligand>
        <name>GTP</name>
        <dbReference type="ChEBI" id="CHEBI:37565"/>
    </ligand>
</feature>
<feature type="modified residue" description="Cysteine methyl ester" evidence="1">
    <location>
        <position position="229"/>
    </location>
</feature>
<feature type="lipid moiety-binding region" description="S-geranylgeranyl cysteine" evidence="1">
    <location>
        <position position="229"/>
    </location>
</feature>
<feature type="sequence variant" id="VAR_020188" description="In dbSNP:rs2270577.">
    <original>P</original>
    <variation>R</variation>
    <location>
        <position position="44"/>
    </location>
</feature>
<feature type="mutagenesis site" description="Impairs interaction with UBXD5." evidence="5">
    <original>T</original>
    <variation>N</variation>
    <location>
        <position position="27"/>
    </location>
</feature>
<feature type="mutagenesis site" description="Abolishes interaction with UBXD5." evidence="5">
    <original>T</original>
    <variation>A</variation>
    <location>
        <position position="45"/>
    </location>
</feature>
<feature type="strand" evidence="11">
    <location>
        <begin position="10"/>
        <end position="12"/>
    </location>
</feature>
<feature type="strand" evidence="12">
    <location>
        <begin position="14"/>
        <end position="19"/>
    </location>
</feature>
<feature type="helix" evidence="12">
    <location>
        <begin position="26"/>
        <end position="35"/>
    </location>
</feature>
<feature type="strand" evidence="12">
    <location>
        <begin position="46"/>
        <end position="55"/>
    </location>
</feature>
<feature type="strand" evidence="12">
    <location>
        <begin position="60"/>
        <end position="68"/>
    </location>
</feature>
<feature type="helix" evidence="12">
    <location>
        <begin position="72"/>
        <end position="74"/>
    </location>
</feature>
<feature type="turn" evidence="12">
    <location>
        <begin position="75"/>
        <end position="77"/>
    </location>
</feature>
<feature type="helix" evidence="12">
    <location>
        <begin position="78"/>
        <end position="81"/>
    </location>
</feature>
<feature type="strand" evidence="12">
    <location>
        <begin position="86"/>
        <end position="93"/>
    </location>
</feature>
<feature type="helix" evidence="12">
    <location>
        <begin position="98"/>
        <end position="104"/>
    </location>
</feature>
<feature type="helix" evidence="12">
    <location>
        <begin position="106"/>
        <end position="114"/>
    </location>
</feature>
<feature type="strand" evidence="12">
    <location>
        <begin position="118"/>
        <end position="125"/>
    </location>
</feature>
<feature type="helix" evidence="12">
    <location>
        <begin position="127"/>
        <end position="131"/>
    </location>
</feature>
<feature type="helix" evidence="12">
    <location>
        <begin position="133"/>
        <end position="141"/>
    </location>
</feature>
<feature type="helix" evidence="12">
    <location>
        <begin position="149"/>
        <end position="159"/>
    </location>
</feature>
<feature type="strand" evidence="12">
    <location>
        <begin position="162"/>
        <end position="166"/>
    </location>
</feature>
<feature type="turn" evidence="12">
    <location>
        <begin position="169"/>
        <end position="171"/>
    </location>
</feature>
<feature type="helix" evidence="12">
    <location>
        <begin position="173"/>
        <end position="188"/>
    </location>
</feature>
<keyword id="KW-0002">3D-structure</keyword>
<keyword id="KW-1003">Cell membrane</keyword>
<keyword id="KW-0963">Cytoplasm</keyword>
<keyword id="KW-0206">Cytoskeleton</keyword>
<keyword id="KW-0342">GTP-binding</keyword>
<keyword id="KW-0449">Lipoprotein</keyword>
<keyword id="KW-0472">Membrane</keyword>
<keyword id="KW-0488">Methylation</keyword>
<keyword id="KW-0547">Nucleotide-binding</keyword>
<keyword id="KW-0636">Prenylation</keyword>
<keyword id="KW-1267">Proteomics identification</keyword>
<keyword id="KW-1185">Reference proteome</keyword>
<accession>Q92730</accession>
<accession>A8K9P7</accession>
<protein>
    <recommendedName>
        <fullName>Rho-related GTP-binding protein Rho6</fullName>
    </recommendedName>
    <alternativeName>
        <fullName>Rho family GTPase 1</fullName>
    </alternativeName>
    <alternativeName>
        <fullName>Rnd1</fullName>
    </alternativeName>
</protein>
<comment type="function">
    <text evidence="4">Lacks intrinsic GTPase activity. Has a low affinity for GDP, and constitutively binds GTP. Controls rearrangements of the actin cytoskeleton. Induces the Rac-dependent neuritic process formation in part by disruption of the cortical actin filaments. Causes the formation of many neuritic processes from the cell body with disruption of the cortical actin filaments.</text>
</comment>
<comment type="subunit">
    <text evidence="3 5 6 7 8">Binds GRB7 and PLXNB1. Interacts with UBXD5. Interacts with PLXNA2.</text>
</comment>
<comment type="interaction">
    <interactant intactId="EBI-448618">
        <id>Q92730</id>
    </interactant>
    <interactant intactId="EBI-638194">
        <id>P53365</id>
        <label>ARFIP2</label>
    </interactant>
    <organismsDiffer>false</organismsDiffer>
    <experiments>3</experiments>
</comment>
<comment type="interaction">
    <interactant intactId="EBI-448618">
        <id>Q92730</id>
    </interactant>
    <interactant intactId="EBI-11721746">
        <id>Q8TED1</id>
        <label>GPX8</label>
    </interactant>
    <organismsDiffer>false</organismsDiffer>
    <experiments>3</experiments>
</comment>
<comment type="interaction">
    <interactant intactId="EBI-448618">
        <id>Q92730</id>
    </interactant>
    <interactant intactId="EBI-970191">
        <id>Q14451</id>
        <label>GRB7</label>
    </interactant>
    <organismsDiffer>false</organismsDiffer>
    <experiments>4</experiments>
</comment>
<comment type="interaction">
    <interactant intactId="EBI-448618">
        <id>Q92730</id>
    </interactant>
    <interactant intactId="EBI-1111488">
        <id>O43157</id>
        <label>PLXNB1</label>
    </interactant>
    <organismsDiffer>false</organismsDiffer>
    <experiments>4</experiments>
</comment>
<comment type="interaction">
    <interactant intactId="EBI-448618">
        <id>Q92730</id>
    </interactant>
    <interactant intactId="EBI-15880891">
        <id>O43157-1</id>
        <label>PLXNB1</label>
    </interactant>
    <organismsDiffer>false</organismsDiffer>
    <experiments>2</experiments>
</comment>
<comment type="interaction">
    <interactant intactId="EBI-448618">
        <id>Q92730</id>
    </interactant>
    <interactant intactId="EBI-722004">
        <id>O15031</id>
        <label>PLXNB2</label>
    </interactant>
    <organismsDiffer>false</organismsDiffer>
    <experiments>2</experiments>
</comment>
<comment type="subcellular location">
    <subcellularLocation>
        <location evidence="5">Cell membrane</location>
        <topology evidence="5">Lipid-anchor</topology>
        <orientation evidence="5">Cytoplasmic side</orientation>
    </subcellularLocation>
    <subcellularLocation>
        <location evidence="5">Cytoplasm</location>
        <location evidence="5">Cytoskeleton</location>
    </subcellularLocation>
</comment>
<comment type="tissue specificity">
    <text>Mostly expressed in brain and liver.</text>
</comment>
<comment type="similarity">
    <text evidence="9">Belongs to the small GTPase superfamily. Rho family.</text>
</comment>
<sequence>MKERRAPQPVVARCKLVLVGDVQCGKTAMLQVLAKDCYPETYVPTVFENYTACLETEEQRVELSLWDTSGSPYYDNVRPLCYSDSDAVLLCFDISRPETVDSALKKWRTEILDYCPSTRVLLIGCKTDLRTDLSTLMELSHQKQAPISYEQGCAIAKQLGAEIYLEGSAFTSEKSIHSIFRTASMLCLNKPSPLPQKSPVRSLSKRLLHLPSRSELISSTFKKEKAKSCSIM</sequence>
<name>RND1_HUMAN</name>
<proteinExistence type="evidence at protein level"/>
<organism>
    <name type="scientific">Homo sapiens</name>
    <name type="common">Human</name>
    <dbReference type="NCBI Taxonomy" id="9606"/>
    <lineage>
        <taxon>Eukaryota</taxon>
        <taxon>Metazoa</taxon>
        <taxon>Chordata</taxon>
        <taxon>Craniata</taxon>
        <taxon>Vertebrata</taxon>
        <taxon>Euteleostomi</taxon>
        <taxon>Mammalia</taxon>
        <taxon>Eutheria</taxon>
        <taxon>Euarchontoglires</taxon>
        <taxon>Primates</taxon>
        <taxon>Haplorrhini</taxon>
        <taxon>Catarrhini</taxon>
        <taxon>Hominidae</taxon>
        <taxon>Homo</taxon>
    </lineage>
</organism>
<dbReference type="EMBL" id="Y07923">
    <property type="protein sequence ID" value="CAA69228.1"/>
    <property type="molecule type" value="mRNA"/>
</dbReference>
<dbReference type="EMBL" id="AB040147">
    <property type="protein sequence ID" value="BAB17851.1"/>
    <property type="molecule type" value="mRNA"/>
</dbReference>
<dbReference type="EMBL" id="AF498967">
    <property type="protein sequence ID" value="AAM21114.1"/>
    <property type="molecule type" value="mRNA"/>
</dbReference>
<dbReference type="EMBL" id="AK292762">
    <property type="protein sequence ID" value="BAF85451.1"/>
    <property type="molecule type" value="mRNA"/>
</dbReference>
<dbReference type="EMBL" id="CH471111">
    <property type="protein sequence ID" value="EAW58019.1"/>
    <property type="molecule type" value="Genomic_DNA"/>
</dbReference>
<dbReference type="EMBL" id="BC026356">
    <property type="protein sequence ID" value="AAH26356.1"/>
    <property type="molecule type" value="mRNA"/>
</dbReference>
<dbReference type="CCDS" id="CCDS8771.1"/>
<dbReference type="RefSeq" id="NP_055285.1">
    <property type="nucleotide sequence ID" value="NM_014470.4"/>
</dbReference>
<dbReference type="PDB" id="2CLS">
    <property type="method" value="X-ray"/>
    <property type="resolution" value="2.31 A"/>
    <property type="chains" value="A/B=5-200"/>
</dbReference>
<dbReference type="PDB" id="2REX">
    <property type="method" value="X-ray"/>
    <property type="resolution" value="2.30 A"/>
    <property type="chains" value="B/D=5-200"/>
</dbReference>
<dbReference type="PDB" id="3Q3J">
    <property type="method" value="X-ray"/>
    <property type="resolution" value="1.97 A"/>
    <property type="chains" value="B=5-200"/>
</dbReference>
<dbReference type="PDBsum" id="2CLS"/>
<dbReference type="PDBsum" id="2REX"/>
<dbReference type="PDBsum" id="3Q3J"/>
<dbReference type="SMR" id="Q92730"/>
<dbReference type="BioGRID" id="118113">
    <property type="interactions" value="242"/>
</dbReference>
<dbReference type="DIP" id="DIP-36741N"/>
<dbReference type="FunCoup" id="Q92730">
    <property type="interactions" value="776"/>
</dbReference>
<dbReference type="IntAct" id="Q92730">
    <property type="interactions" value="10"/>
</dbReference>
<dbReference type="MINT" id="Q92730"/>
<dbReference type="STRING" id="9606.ENSP00000308461"/>
<dbReference type="iPTMnet" id="Q92730"/>
<dbReference type="PhosphoSitePlus" id="Q92730"/>
<dbReference type="BioMuta" id="RND1"/>
<dbReference type="DMDM" id="2500182"/>
<dbReference type="MassIVE" id="Q92730"/>
<dbReference type="PaxDb" id="9606-ENSP00000308461"/>
<dbReference type="PeptideAtlas" id="Q92730"/>
<dbReference type="ProteomicsDB" id="75420"/>
<dbReference type="Antibodypedia" id="25722">
    <property type="antibodies" value="148 antibodies from 27 providers"/>
</dbReference>
<dbReference type="DNASU" id="27289"/>
<dbReference type="Ensembl" id="ENST00000309739.6">
    <property type="protein sequence ID" value="ENSP00000308461.5"/>
    <property type="gene ID" value="ENSG00000172602.11"/>
</dbReference>
<dbReference type="GeneID" id="27289"/>
<dbReference type="KEGG" id="hsa:27289"/>
<dbReference type="MANE-Select" id="ENST00000309739.6">
    <property type="protein sequence ID" value="ENSP00000308461.5"/>
    <property type="RefSeq nucleotide sequence ID" value="NM_014470.4"/>
    <property type="RefSeq protein sequence ID" value="NP_055285.1"/>
</dbReference>
<dbReference type="UCSC" id="uc001rsn.4">
    <property type="organism name" value="human"/>
</dbReference>
<dbReference type="AGR" id="HGNC:18314"/>
<dbReference type="CTD" id="27289"/>
<dbReference type="DisGeNET" id="27289"/>
<dbReference type="GeneCards" id="RND1"/>
<dbReference type="HGNC" id="HGNC:18314">
    <property type="gene designation" value="RND1"/>
</dbReference>
<dbReference type="HPA" id="ENSG00000172602">
    <property type="expression patterns" value="Tissue enhanced (brain, liver)"/>
</dbReference>
<dbReference type="MIM" id="609038">
    <property type="type" value="gene"/>
</dbReference>
<dbReference type="neXtProt" id="NX_Q92730"/>
<dbReference type="OpenTargets" id="ENSG00000172602"/>
<dbReference type="PharmGKB" id="PA134972408"/>
<dbReference type="VEuPathDB" id="HostDB:ENSG00000172602"/>
<dbReference type="eggNOG" id="KOG0393">
    <property type="taxonomic scope" value="Eukaryota"/>
</dbReference>
<dbReference type="GeneTree" id="ENSGT00940000158666"/>
<dbReference type="HOGENOM" id="CLU_041217_21_1_1"/>
<dbReference type="InParanoid" id="Q92730"/>
<dbReference type="OMA" id="PIVARCK"/>
<dbReference type="OrthoDB" id="8830751at2759"/>
<dbReference type="PAN-GO" id="Q92730">
    <property type="GO annotations" value="14 GO annotations based on evolutionary models"/>
</dbReference>
<dbReference type="PhylomeDB" id="Q92730"/>
<dbReference type="TreeFam" id="TF330887"/>
<dbReference type="PathwayCommons" id="Q92730"/>
<dbReference type="Reactome" id="R-HSA-399955">
    <property type="pathway name" value="SEMA3A-Plexin repulsion signaling by inhibiting Integrin adhesion"/>
</dbReference>
<dbReference type="Reactome" id="R-HSA-416550">
    <property type="pathway name" value="Sema4D mediated inhibition of cell attachment and migration"/>
</dbReference>
<dbReference type="Reactome" id="R-HSA-416572">
    <property type="pathway name" value="Sema4D induced cell migration and growth-cone collapse"/>
</dbReference>
<dbReference type="Reactome" id="R-HSA-9696273">
    <property type="pathway name" value="RND1 GTPase cycle"/>
</dbReference>
<dbReference type="SignaLink" id="Q92730"/>
<dbReference type="SIGNOR" id="Q92730"/>
<dbReference type="BioGRID-ORCS" id="27289">
    <property type="hits" value="37 hits in 1146 CRISPR screens"/>
</dbReference>
<dbReference type="ChiTaRS" id="RND1">
    <property type="organism name" value="human"/>
</dbReference>
<dbReference type="EvolutionaryTrace" id="Q92730"/>
<dbReference type="GeneWiki" id="Rnd1"/>
<dbReference type="GenomeRNAi" id="27289"/>
<dbReference type="Pharos" id="Q92730">
    <property type="development level" value="Tbio"/>
</dbReference>
<dbReference type="PRO" id="PR:Q92730"/>
<dbReference type="Proteomes" id="UP000005640">
    <property type="component" value="Chromosome 12"/>
</dbReference>
<dbReference type="RNAct" id="Q92730">
    <property type="molecule type" value="protein"/>
</dbReference>
<dbReference type="Bgee" id="ENSG00000172602">
    <property type="expression patterns" value="Expressed in vena cava and 143 other cell types or tissues"/>
</dbReference>
<dbReference type="ExpressionAtlas" id="Q92730">
    <property type="expression patterns" value="baseline and differential"/>
</dbReference>
<dbReference type="GO" id="GO:0015629">
    <property type="term" value="C:actin cytoskeleton"/>
    <property type="evidence" value="ECO:0000314"/>
    <property type="project" value="HPA"/>
</dbReference>
<dbReference type="GO" id="GO:0005912">
    <property type="term" value="C:adherens junction"/>
    <property type="evidence" value="ECO:0000314"/>
    <property type="project" value="UniProtKB"/>
</dbReference>
<dbReference type="GO" id="GO:0005829">
    <property type="term" value="C:cytosol"/>
    <property type="evidence" value="ECO:0000318"/>
    <property type="project" value="GO_Central"/>
</dbReference>
<dbReference type="GO" id="GO:0043231">
    <property type="term" value="C:intracellular membrane-bounded organelle"/>
    <property type="evidence" value="ECO:0000314"/>
    <property type="project" value="HPA"/>
</dbReference>
<dbReference type="GO" id="GO:0005886">
    <property type="term" value="C:plasma membrane"/>
    <property type="evidence" value="ECO:0000314"/>
    <property type="project" value="HPA"/>
</dbReference>
<dbReference type="GO" id="GO:0005525">
    <property type="term" value="F:GTP binding"/>
    <property type="evidence" value="ECO:0000318"/>
    <property type="project" value="GO_Central"/>
</dbReference>
<dbReference type="GO" id="GO:0003924">
    <property type="term" value="F:GTPase activity"/>
    <property type="evidence" value="ECO:0000318"/>
    <property type="project" value="GO_Central"/>
</dbReference>
<dbReference type="GO" id="GO:0019901">
    <property type="term" value="F:protein kinase binding"/>
    <property type="evidence" value="ECO:0000318"/>
    <property type="project" value="GO_Central"/>
</dbReference>
<dbReference type="GO" id="GO:0005102">
    <property type="term" value="F:signaling receptor binding"/>
    <property type="evidence" value="ECO:0000353"/>
    <property type="project" value="UniProtKB"/>
</dbReference>
<dbReference type="GO" id="GO:0007015">
    <property type="term" value="P:actin filament organization"/>
    <property type="evidence" value="ECO:0000314"/>
    <property type="project" value="UniProtKB"/>
</dbReference>
<dbReference type="GO" id="GO:0007162">
    <property type="term" value="P:negative regulation of cell adhesion"/>
    <property type="evidence" value="ECO:0000314"/>
    <property type="project" value="UniProtKB"/>
</dbReference>
<dbReference type="GO" id="GO:0016322">
    <property type="term" value="P:neuron remodeling"/>
    <property type="evidence" value="ECO:0000314"/>
    <property type="project" value="UniProtKB"/>
</dbReference>
<dbReference type="GO" id="GO:0032956">
    <property type="term" value="P:regulation of actin cytoskeleton organization"/>
    <property type="evidence" value="ECO:0000318"/>
    <property type="project" value="GO_Central"/>
</dbReference>
<dbReference type="GO" id="GO:0007165">
    <property type="term" value="P:signal transduction"/>
    <property type="evidence" value="ECO:0000318"/>
    <property type="project" value="GO_Central"/>
</dbReference>
<dbReference type="GO" id="GO:0007264">
    <property type="term" value="P:small GTPase-mediated signal transduction"/>
    <property type="evidence" value="ECO:0007669"/>
    <property type="project" value="InterPro"/>
</dbReference>
<dbReference type="CDD" id="cd04174">
    <property type="entry name" value="Rnd1_Rho6"/>
    <property type="match status" value="1"/>
</dbReference>
<dbReference type="FunFam" id="3.40.50.300:FF:000569">
    <property type="entry name" value="Rho-related GTP-binding protein Rho6"/>
    <property type="match status" value="1"/>
</dbReference>
<dbReference type="Gene3D" id="3.40.50.300">
    <property type="entry name" value="P-loop containing nucleotide triphosphate hydrolases"/>
    <property type="match status" value="1"/>
</dbReference>
<dbReference type="InterPro" id="IPR027417">
    <property type="entry name" value="P-loop_NTPase"/>
</dbReference>
<dbReference type="InterPro" id="IPR005225">
    <property type="entry name" value="Small_GTP-bd"/>
</dbReference>
<dbReference type="InterPro" id="IPR001806">
    <property type="entry name" value="Small_GTPase"/>
</dbReference>
<dbReference type="InterPro" id="IPR003578">
    <property type="entry name" value="Small_GTPase_Rho"/>
</dbReference>
<dbReference type="NCBIfam" id="TIGR00231">
    <property type="entry name" value="small_GTP"/>
    <property type="match status" value="1"/>
</dbReference>
<dbReference type="PANTHER" id="PTHR24072">
    <property type="entry name" value="RHO FAMILY GTPASE"/>
    <property type="match status" value="1"/>
</dbReference>
<dbReference type="Pfam" id="PF00071">
    <property type="entry name" value="Ras"/>
    <property type="match status" value="1"/>
</dbReference>
<dbReference type="PRINTS" id="PR00449">
    <property type="entry name" value="RASTRNSFRMNG"/>
</dbReference>
<dbReference type="SMART" id="SM00175">
    <property type="entry name" value="RAB"/>
    <property type="match status" value="1"/>
</dbReference>
<dbReference type="SMART" id="SM00173">
    <property type="entry name" value="RAS"/>
    <property type="match status" value="1"/>
</dbReference>
<dbReference type="SMART" id="SM00174">
    <property type="entry name" value="RHO"/>
    <property type="match status" value="1"/>
</dbReference>
<dbReference type="SUPFAM" id="SSF52540">
    <property type="entry name" value="P-loop containing nucleoside triphosphate hydrolases"/>
    <property type="match status" value="1"/>
</dbReference>
<dbReference type="PROSITE" id="PS51420">
    <property type="entry name" value="RHO"/>
    <property type="match status" value="1"/>
</dbReference>
<reference key="1">
    <citation type="journal article" date="1998" name="J. Cell Biol.">
        <title>A new member of the Rho family, Rnd1, promotes disassembly of actin filament structures and loss of cell adhesion.</title>
        <authorList>
            <person name="Nobes C.D."/>
            <person name="Lauritzen I."/>
            <person name="Mattei M.-G."/>
            <person name="Paris S."/>
            <person name="Hall A."/>
            <person name="Chardin P."/>
        </authorList>
    </citation>
    <scope>NUCLEOTIDE SEQUENCE [MRNA]</scope>
    <source>
        <tissue>Brain</tissue>
    </source>
</reference>
<reference key="2">
    <citation type="submission" date="2000-03" db="EMBL/GenBank/DDBJ databases">
        <title>Human Rnd1 in carcinogenesis.</title>
        <authorList>
            <person name="Tanaka S."/>
            <person name="Sugimachi K."/>
        </authorList>
    </citation>
    <scope>NUCLEOTIDE SEQUENCE [MRNA]</scope>
</reference>
<reference key="3">
    <citation type="submission" date="2002-04" db="EMBL/GenBank/DDBJ databases">
        <title>cDNA clones of human proteins involved in signal transduction sequenced by the Guthrie cDNA resource center (www.cdna.org).</title>
        <authorList>
            <person name="Puhl H.L. III"/>
            <person name="Ikeda S.R."/>
            <person name="Aronstam R.S."/>
        </authorList>
    </citation>
    <scope>NUCLEOTIDE SEQUENCE [LARGE SCALE MRNA]</scope>
    <source>
        <tissue>Brain</tissue>
    </source>
</reference>
<reference key="4">
    <citation type="journal article" date="2004" name="Nat. Genet.">
        <title>Complete sequencing and characterization of 21,243 full-length human cDNAs.</title>
        <authorList>
            <person name="Ota T."/>
            <person name="Suzuki Y."/>
            <person name="Nishikawa T."/>
            <person name="Otsuki T."/>
            <person name="Sugiyama T."/>
            <person name="Irie R."/>
            <person name="Wakamatsu A."/>
            <person name="Hayashi K."/>
            <person name="Sato H."/>
            <person name="Nagai K."/>
            <person name="Kimura K."/>
            <person name="Makita H."/>
            <person name="Sekine M."/>
            <person name="Obayashi M."/>
            <person name="Nishi T."/>
            <person name="Shibahara T."/>
            <person name="Tanaka T."/>
            <person name="Ishii S."/>
            <person name="Yamamoto J."/>
            <person name="Saito K."/>
            <person name="Kawai Y."/>
            <person name="Isono Y."/>
            <person name="Nakamura Y."/>
            <person name="Nagahari K."/>
            <person name="Murakami K."/>
            <person name="Yasuda T."/>
            <person name="Iwayanagi T."/>
            <person name="Wagatsuma M."/>
            <person name="Shiratori A."/>
            <person name="Sudo H."/>
            <person name="Hosoiri T."/>
            <person name="Kaku Y."/>
            <person name="Kodaira H."/>
            <person name="Kondo H."/>
            <person name="Sugawara M."/>
            <person name="Takahashi M."/>
            <person name="Kanda K."/>
            <person name="Yokoi T."/>
            <person name="Furuya T."/>
            <person name="Kikkawa E."/>
            <person name="Omura Y."/>
            <person name="Abe K."/>
            <person name="Kamihara K."/>
            <person name="Katsuta N."/>
            <person name="Sato K."/>
            <person name="Tanikawa M."/>
            <person name="Yamazaki M."/>
            <person name="Ninomiya K."/>
            <person name="Ishibashi T."/>
            <person name="Yamashita H."/>
            <person name="Murakawa K."/>
            <person name="Fujimori K."/>
            <person name="Tanai H."/>
            <person name="Kimata M."/>
            <person name="Watanabe M."/>
            <person name="Hiraoka S."/>
            <person name="Chiba Y."/>
            <person name="Ishida S."/>
            <person name="Ono Y."/>
            <person name="Takiguchi S."/>
            <person name="Watanabe S."/>
            <person name="Yosida M."/>
            <person name="Hotuta T."/>
            <person name="Kusano J."/>
            <person name="Kanehori K."/>
            <person name="Takahashi-Fujii A."/>
            <person name="Hara H."/>
            <person name="Tanase T.-O."/>
            <person name="Nomura Y."/>
            <person name="Togiya S."/>
            <person name="Komai F."/>
            <person name="Hara R."/>
            <person name="Takeuchi K."/>
            <person name="Arita M."/>
            <person name="Imose N."/>
            <person name="Musashino K."/>
            <person name="Yuuki H."/>
            <person name="Oshima A."/>
            <person name="Sasaki N."/>
            <person name="Aotsuka S."/>
            <person name="Yoshikawa Y."/>
            <person name="Matsunawa H."/>
            <person name="Ichihara T."/>
            <person name="Shiohata N."/>
            <person name="Sano S."/>
            <person name="Moriya S."/>
            <person name="Momiyama H."/>
            <person name="Satoh N."/>
            <person name="Takami S."/>
            <person name="Terashima Y."/>
            <person name="Suzuki O."/>
            <person name="Nakagawa S."/>
            <person name="Senoh A."/>
            <person name="Mizoguchi H."/>
            <person name="Goto Y."/>
            <person name="Shimizu F."/>
            <person name="Wakebe H."/>
            <person name="Hishigaki H."/>
            <person name="Watanabe T."/>
            <person name="Sugiyama A."/>
            <person name="Takemoto M."/>
            <person name="Kawakami B."/>
            <person name="Yamazaki M."/>
            <person name="Watanabe K."/>
            <person name="Kumagai A."/>
            <person name="Itakura S."/>
            <person name="Fukuzumi Y."/>
            <person name="Fujimori Y."/>
            <person name="Komiyama M."/>
            <person name="Tashiro H."/>
            <person name="Tanigami A."/>
            <person name="Fujiwara T."/>
            <person name="Ono T."/>
            <person name="Yamada K."/>
            <person name="Fujii Y."/>
            <person name="Ozaki K."/>
            <person name="Hirao M."/>
            <person name="Ohmori Y."/>
            <person name="Kawabata A."/>
            <person name="Hikiji T."/>
            <person name="Kobatake N."/>
            <person name="Inagaki H."/>
            <person name="Ikema Y."/>
            <person name="Okamoto S."/>
            <person name="Okitani R."/>
            <person name="Kawakami T."/>
            <person name="Noguchi S."/>
            <person name="Itoh T."/>
            <person name="Shigeta K."/>
            <person name="Senba T."/>
            <person name="Matsumura K."/>
            <person name="Nakajima Y."/>
            <person name="Mizuno T."/>
            <person name="Morinaga M."/>
            <person name="Sasaki M."/>
            <person name="Togashi T."/>
            <person name="Oyama M."/>
            <person name="Hata H."/>
            <person name="Watanabe M."/>
            <person name="Komatsu T."/>
            <person name="Mizushima-Sugano J."/>
            <person name="Satoh T."/>
            <person name="Shirai Y."/>
            <person name="Takahashi Y."/>
            <person name="Nakagawa K."/>
            <person name="Okumura K."/>
            <person name="Nagase T."/>
            <person name="Nomura N."/>
            <person name="Kikuchi H."/>
            <person name="Masuho Y."/>
            <person name="Yamashita R."/>
            <person name="Nakai K."/>
            <person name="Yada T."/>
            <person name="Nakamura Y."/>
            <person name="Ohara O."/>
            <person name="Isogai T."/>
            <person name="Sugano S."/>
        </authorList>
    </citation>
    <scope>NUCLEOTIDE SEQUENCE [LARGE SCALE MRNA]</scope>
    <source>
        <tissue>Lung</tissue>
    </source>
</reference>
<reference key="5">
    <citation type="submission" date="2005-07" db="EMBL/GenBank/DDBJ databases">
        <authorList>
            <person name="Mural R.J."/>
            <person name="Istrail S."/>
            <person name="Sutton G.G."/>
            <person name="Florea L."/>
            <person name="Halpern A.L."/>
            <person name="Mobarry C.M."/>
            <person name="Lippert R."/>
            <person name="Walenz B."/>
            <person name="Shatkay H."/>
            <person name="Dew I."/>
            <person name="Miller J.R."/>
            <person name="Flanigan M.J."/>
            <person name="Edwards N.J."/>
            <person name="Bolanos R."/>
            <person name="Fasulo D."/>
            <person name="Halldorsson B.V."/>
            <person name="Hannenhalli S."/>
            <person name="Turner R."/>
            <person name="Yooseph S."/>
            <person name="Lu F."/>
            <person name="Nusskern D.R."/>
            <person name="Shue B.C."/>
            <person name="Zheng X.H."/>
            <person name="Zhong F."/>
            <person name="Delcher A.L."/>
            <person name="Huson D.H."/>
            <person name="Kravitz S.A."/>
            <person name="Mouchard L."/>
            <person name="Reinert K."/>
            <person name="Remington K.A."/>
            <person name="Clark A.G."/>
            <person name="Waterman M.S."/>
            <person name="Eichler E.E."/>
            <person name="Adams M.D."/>
            <person name="Hunkapiller M.W."/>
            <person name="Myers E.W."/>
            <person name="Venter J.C."/>
        </authorList>
    </citation>
    <scope>NUCLEOTIDE SEQUENCE [LARGE SCALE GENOMIC DNA]</scope>
</reference>
<reference key="6">
    <citation type="journal article" date="2004" name="Genome Res.">
        <title>The status, quality, and expansion of the NIH full-length cDNA project: the Mammalian Gene Collection (MGC).</title>
        <authorList>
            <consortium name="The MGC Project Team"/>
        </authorList>
    </citation>
    <scope>NUCLEOTIDE SEQUENCE [LARGE SCALE MRNA]</scope>
    <source>
        <tissue>Brain</tissue>
    </source>
</reference>
<reference key="7">
    <citation type="journal article" date="2000" name="Biochem. Biophys. Res. Commun.">
        <title>Rnd1, a novel rho family GTPase, induces the formation of neuritic processes in PC12 cells.</title>
        <authorList>
            <person name="Aoki J."/>
            <person name="Katoh H."/>
            <person name="Mori K."/>
            <person name="Negishi M."/>
        </authorList>
    </citation>
    <scope>FUNCTION</scope>
</reference>
<reference key="8">
    <citation type="journal article" date="2000" name="FEBS Lett.">
        <title>Interaction of the Grb7 adapter protein with Rnd1, a new member of the Rho family.</title>
        <authorList>
            <person name="Vayssiere B."/>
            <person name="Zalcman G."/>
            <person name="Mahe Y."/>
            <person name="Mirey G."/>
            <person name="Ligensa T."/>
            <person name="Weidner K.M."/>
            <person name="Chardin P."/>
            <person name="Camonis J."/>
        </authorList>
    </citation>
    <scope>INTERACTION WITH GRB7</scope>
</reference>
<reference key="9">
    <citation type="journal article" date="2002" name="Mol. Cell. Biol.">
        <title>Socius is a novel Rnd GTPase-interacting protein involved in disassembly of actin stress fibers.</title>
        <authorList>
            <person name="Katoh H."/>
            <person name="Harada A."/>
            <person name="Mori K."/>
            <person name="Negishi M."/>
        </authorList>
    </citation>
    <scope>INTERACTION WITH UBXD5</scope>
    <scope>MUTAGENESIS OF THR-27 AND THR-45</scope>
    <scope>SUBCELLULAR LOCATION</scope>
</reference>
<reference key="10">
    <citation type="journal article" date="2003" name="J. Biol. Chem.">
        <title>Direct interaction of Rnd1 with Plexin-B1 regulates PDZ-RhoGEF-mediated Rho activation by Plexin-B1 and induces cell contraction in COS-7 cells.</title>
        <authorList>
            <person name="Oinuma I."/>
            <person name="Katoh H."/>
            <person name="Harada A."/>
            <person name="Negishi M."/>
        </authorList>
    </citation>
    <scope>INTERACTION WITH PLXNB1</scope>
</reference>
<reference key="11">
    <citation type="journal article" date="2009" name="J. Biol. Chem.">
        <title>Structure and function of the intracellular region of the plexin-B1 transmembrane receptor.</title>
        <authorList>
            <person name="Tong Y."/>
            <person name="Hota P.K."/>
            <person name="Penachioni J.Y."/>
            <person name="Hamaneh M.B."/>
            <person name="Kim S."/>
            <person name="Alviani R.S."/>
            <person name="Shen L."/>
            <person name="He H."/>
            <person name="Tempel W."/>
            <person name="Tamagnone L."/>
            <person name="Park H.W."/>
            <person name="Buck M."/>
        </authorList>
    </citation>
    <scope>X-RAY CRYSTALLOGRAPHY (2.3 ANGSTROMS) OF 5-200 IN COMPLEX WITH GDP AND PLXNB1</scope>
</reference>
<reference key="12">
    <citation type="submission" date="2011-01" db="PDB data bank">
        <title>Crystal structure of plexin A2 RBD in complex with RND1.</title>
        <authorList>
            <consortium name="Structural genomics consortium (SGC)"/>
        </authorList>
    </citation>
    <scope>X-RAY CRYSTALLOGRAPHY (1.97 ANGSTROMS) OF 5-200 IN COMPLEX WITH PLXNA2</scope>
</reference>
<gene>
    <name type="primary">RND1</name>
    <name type="synonym">RHO6</name>
</gene>